<gene>
    <name type="primary">CP</name>
</gene>
<organismHost>
    <name type="scientific">Brassica napus</name>
    <name type="common">Rape</name>
    <dbReference type="NCBI Taxonomy" id="3708"/>
</organismHost>
<organism>
    <name type="scientific">Youcai mosaic virus</name>
    <name type="common">YoMV</name>
    <dbReference type="NCBI Taxonomy" id="228578"/>
    <lineage>
        <taxon>Viruses</taxon>
        <taxon>Riboviria</taxon>
        <taxon>Orthornavirae</taxon>
        <taxon>Kitrinoviricota</taxon>
        <taxon>Alsuviricetes</taxon>
        <taxon>Martellivirales</taxon>
        <taxon>Virgaviridae</taxon>
        <taxon>Tobamovirus</taxon>
    </lineage>
</organism>
<accession>Q66222</accession>
<keyword id="KW-0167">Capsid protein</keyword>
<keyword id="KW-1139">Helical capsid protein</keyword>
<keyword id="KW-1185">Reference proteome</keyword>
<keyword id="KW-0946">Virion</keyword>
<comment type="function">
    <text>Capsid protein self-assembles to form rod-shaped virions about 18 nm in diameter with a central canal enclosing the viral genomic RNA.</text>
</comment>
<comment type="subcellular location">
    <subcellularLocation>
        <location evidence="1">Virion</location>
    </subcellularLocation>
</comment>
<comment type="similarity">
    <text evidence="1">Belongs to the virgaviridae capsid protein family.</text>
</comment>
<dbReference type="EMBL" id="U30944">
    <property type="protein sequence ID" value="AAB60601.1"/>
    <property type="molecule type" value="mRNA"/>
</dbReference>
<dbReference type="PIR" id="S65055">
    <property type="entry name" value="S65055"/>
</dbReference>
<dbReference type="RefSeq" id="NP_740759.1">
    <property type="nucleotide sequence ID" value="NC_004422.1"/>
</dbReference>
<dbReference type="SMR" id="Q66222"/>
<dbReference type="KEGG" id="vg:955945"/>
<dbReference type="OrthoDB" id="12635at10239"/>
<dbReference type="Proteomes" id="UP000008609">
    <property type="component" value="Segment"/>
</dbReference>
<dbReference type="GO" id="GO:0019029">
    <property type="term" value="C:helical viral capsid"/>
    <property type="evidence" value="ECO:0007669"/>
    <property type="project" value="UniProtKB-KW"/>
</dbReference>
<dbReference type="GO" id="GO:0005198">
    <property type="term" value="F:structural molecule activity"/>
    <property type="evidence" value="ECO:0007669"/>
    <property type="project" value="InterPro"/>
</dbReference>
<dbReference type="Gene3D" id="1.20.120.70">
    <property type="entry name" value="Tobacco mosaic virus-like, coat protein"/>
    <property type="match status" value="1"/>
</dbReference>
<dbReference type="InterPro" id="IPR001337">
    <property type="entry name" value="TMV-like_coat"/>
</dbReference>
<dbReference type="InterPro" id="IPR036417">
    <property type="entry name" value="TMV-like_coat_sf"/>
</dbReference>
<dbReference type="Pfam" id="PF00721">
    <property type="entry name" value="TMV_coat"/>
    <property type="match status" value="1"/>
</dbReference>
<dbReference type="SUPFAM" id="SSF47195">
    <property type="entry name" value="TMV-like viral coat proteins"/>
    <property type="match status" value="1"/>
</dbReference>
<sequence>MVYNITSSNQYQYFAAMWAEPTAMLNQCVSALSQSYQTQAARDTVRQQFSNLLSAIVTPNQRFPEAGYRVYINSAVLKPLYESLMKSFDTRNRIIETEEESRPSASEVANATQRVDDATVAIRSQIQLLLNELSNGHGLMNRAEFEVLLPWATAPAT</sequence>
<reference key="1">
    <citation type="journal article" date="1996" name="Plant Mol. Biol.">
        <title>Nucleotide sequence of Chinese rape mosaic virus (oilseed rape mosaic virus), a crucifer tobamovirus infectious on Arabidopsis thaliana.</title>
        <authorList>
            <person name="Aguilar I."/>
            <person name="Sanchez F."/>
            <person name="Martin-Martin A."/>
            <person name="Martinez-Herrera D."/>
            <person name="Ponz F."/>
        </authorList>
    </citation>
    <scope>NUCLEOTIDE SEQUENCE [MRNA]</scope>
</reference>
<feature type="initiator methionine" description="Removed; by host">
    <location>
        <position position="1"/>
    </location>
</feature>
<feature type="chain" id="PRO_0000144930" description="Capsid protein">
    <location>
        <begin position="2"/>
        <end position="157"/>
    </location>
</feature>
<protein>
    <recommendedName>
        <fullName>Capsid protein</fullName>
    </recommendedName>
    <alternativeName>
        <fullName>Coat protein</fullName>
    </alternativeName>
</protein>
<proteinExistence type="evidence at transcript level"/>
<name>CAPSD_YOMV</name>
<evidence type="ECO:0000305" key="1"/>